<feature type="chain" id="PRO_0000436379" description="Triplex capsid protein 1">
    <location>
        <begin position="1"/>
        <end position="465"/>
    </location>
</feature>
<feature type="region of interest" description="Disordered" evidence="2">
    <location>
        <begin position="1"/>
        <end position="29"/>
    </location>
</feature>
<sequence>MKTNPLPATPSVWGGSTVELPPTTRDTAGQGLLRRVLRPPISRRDGPGLPRGSGPRRAASTLWLLGLDGTDAPPGALTPNDDTEQALDKILRGTMRGGAALIGSPRHHLTRQVILTDLCQPNADRAGTLLLALRHPADLPHLAHQRAPPGRQTERLGEAWGQLMEATALGSGRAESGCTRAGLVSFNFLVAACAASYDARDAADAVRAHVTANYRGTRVGARLDRFSECLRAMVHTHVFPHEVMRFFGGLVSWVTQDELASVTAVCAGPQEAAHTGHPGRPRSAVILPACAFVDLDAELGLGGPGAAFLYLVFTYRQRRDQELCCVYVIKSQLPPRGLEPALERLFGRLRITNTIHGTEDMTPPAPNRNPDFPLAGLAANPQTPRCSAGQVTNPQFADRLYRWQPDLRGRPTARTCTYAAFAELGMMPEDSPRCLHRTERFGAVSVPVVILEGVVWRPGEWRACA</sequence>
<organismHost>
    <name type="scientific">Homo sapiens</name>
    <name type="common">Human</name>
    <dbReference type="NCBI Taxonomy" id="9606"/>
</organismHost>
<accession>P32888</accession>
<accession>P10222</accession>
<protein>
    <recommendedName>
        <fullName evidence="1">Triplex capsid protein 1</fullName>
    </recommendedName>
</protein>
<comment type="function">
    <text evidence="1 3 5 6 7 8">Structural component of the T=16 icosahedral capsid. The capsid is composed of pentamers and hexamers of major capsid protein/MCP, which are linked together by heterotrimers called triplexes. These triplexes are formed by a single molecule of triplex protein 1/TRX1 and two copies of triplex protein 2/TRX2. Additionally, TRX1 is required for efficient transport of TRX2 to the nucleus, which is the site of capsid assembly.</text>
</comment>
<comment type="subunit">
    <text evidence="1 4">Interacts with TRX2, MCP and capsid vertex component 2/CVC2.</text>
</comment>
<comment type="subcellular location">
    <subcellularLocation>
        <location evidence="1">Virion</location>
    </subcellularLocation>
    <subcellularLocation>
        <location evidence="1">Host nucleus</location>
    </subcellularLocation>
</comment>
<comment type="similarity">
    <text evidence="1">Belongs to the herpesviridae TRX1 protein family.</text>
</comment>
<proteinExistence type="evidence at protein level"/>
<gene>
    <name evidence="1" type="primary">TRX1</name>
    <name type="ordered locus">UL38</name>
</gene>
<name>TRX1_HHV11</name>
<organism>
    <name type="scientific">Human herpesvirus 1 (strain 17)</name>
    <name type="common">HHV-1</name>
    <name type="synonym">Human herpes simplex virus 1</name>
    <dbReference type="NCBI Taxonomy" id="10299"/>
    <lineage>
        <taxon>Viruses</taxon>
        <taxon>Duplodnaviria</taxon>
        <taxon>Heunggongvirae</taxon>
        <taxon>Peploviricota</taxon>
        <taxon>Herviviricetes</taxon>
        <taxon>Herpesvirales</taxon>
        <taxon>Orthoherpesviridae</taxon>
        <taxon>Alphaherpesvirinae</taxon>
        <taxon>Simplexvirus</taxon>
        <taxon>Simplexvirus humanalpha1</taxon>
        <taxon>Human herpesvirus 1</taxon>
    </lineage>
</organism>
<reference key="1">
    <citation type="journal article" date="1988" name="J. Gen. Virol.">
        <title>The complete DNA sequence of the long unique region in the genome of herpes simplex virus type 1.</title>
        <authorList>
            <person name="McGeoch D.J."/>
            <person name="Dalrymple M.A."/>
            <person name="Davison A.J."/>
            <person name="Dolan A."/>
            <person name="Frame M.C."/>
            <person name="McNab D."/>
            <person name="Perry L.J."/>
            <person name="Scott J.E."/>
            <person name="Taylor P."/>
        </authorList>
    </citation>
    <scope>NUCLEOTIDE SEQUENCE [GENOMIC DNA]</scope>
</reference>
<reference key="2">
    <citation type="journal article" date="1990" name="J. Gen. Virol.">
        <title>Identification of the genes encoding two capsid proteins of herpes simplex virus type 1 by direct amino acid sequencing.</title>
        <authorList>
            <person name="Rixon F.J."/>
            <person name="Davison M.D."/>
            <person name="Davison A.J."/>
        </authorList>
    </citation>
    <scope>FUNCTION</scope>
</reference>
<reference key="3">
    <citation type="journal article" date="1996" name="J. Mol. Biol.">
        <title>The herpes simplex virus procapsid: structure, conformational changes upon maturation, and roles of the triplex proteins VP19c and VP23 in assembly.</title>
        <authorList>
            <person name="Trus B.L."/>
            <person name="Booy F.P."/>
            <person name="Newcomb W.W."/>
            <person name="Brown J.C."/>
            <person name="Homa F.L."/>
            <person name="Thomsen D.R."/>
            <person name="Steven A.C."/>
        </authorList>
    </citation>
    <scope>FUNCTION</scope>
</reference>
<reference key="4">
    <citation type="journal article" date="1999" name="J. Virol.">
        <title>Roles of triplex and scaffolding proteins in herpes simplex virus type 1 capsid formation suggested by structures of recombinant particles.</title>
        <authorList>
            <person name="Saad A."/>
            <person name="Zhou Z.H."/>
            <person name="Jakana J."/>
            <person name="Chiu W."/>
            <person name="Rixon F.J."/>
        </authorList>
    </citation>
    <scope>FUNCTION</scope>
</reference>
<reference key="5">
    <citation type="journal article" date="2001" name="J. Virol.">
        <title>Role of the UL25 gene product in packaging DNA into the herpes simplex virus capsid: location of UL25 product in the capsid and demonstration that it binds DNA.</title>
        <authorList>
            <person name="Ogasawara M."/>
            <person name="Suzutani T."/>
            <person name="Yoshida I."/>
            <person name="Azuma M."/>
        </authorList>
    </citation>
    <scope>INTERACTION WITH CVC2</scope>
</reference>
<reference key="6">
    <citation type="journal article" date="2006" name="J. Virol.">
        <title>Functional analysis of the triplex proteins (VP19C and VP23) of herpes simplex virus type 1.</title>
        <authorList>
            <person name="Okoye M.E."/>
            <person name="Sexton G.L."/>
            <person name="Huang E."/>
            <person name="McCaffery J.M."/>
            <person name="Desai P."/>
        </authorList>
    </citation>
    <scope>FUNCTION</scope>
</reference>
<reference key="7">
    <citation type="journal article" date="2006" name="J. Virol.">
        <title>Mutational analysis of the herpes simplex virus triplex protein VP19C.</title>
        <authorList>
            <person name="Adamson W.E."/>
            <person name="McNab D."/>
            <person name="Preston V.G."/>
            <person name="Rixon F.J."/>
        </authorList>
    </citation>
    <scope>FUNCTION</scope>
</reference>
<reference key="8">
    <citation type="journal article" date="1992" name="J. Gen. Virol.">
        <title>Identification of genes encoding two capsid proteins (VP24 and VP26) of herpes simplex virus type 1.</title>
        <authorList>
            <person name="Davison M.D."/>
            <person name="Rixon F.J."/>
            <person name="Davison A.J."/>
        </authorList>
    </citation>
    <scope>PROTEIN SEQUENCE OF 1-16</scope>
</reference>
<dbReference type="EMBL" id="X14112">
    <property type="protein sequence ID" value="CAA32313.1"/>
    <property type="molecule type" value="Genomic_DNA"/>
</dbReference>
<dbReference type="PIR" id="B30088">
    <property type="entry name" value="WMBEZ8"/>
</dbReference>
<dbReference type="RefSeq" id="YP_009137113.1">
    <property type="nucleotide sequence ID" value="NC_001806.2"/>
</dbReference>
<dbReference type="SMR" id="P32888"/>
<dbReference type="BioGRID" id="971404">
    <property type="interactions" value="5"/>
</dbReference>
<dbReference type="DIP" id="DIP-2193N"/>
<dbReference type="DNASU" id="2703359"/>
<dbReference type="GeneID" id="2703359"/>
<dbReference type="KEGG" id="vg:2703359"/>
<dbReference type="Proteomes" id="UP000009294">
    <property type="component" value="Segment"/>
</dbReference>
<dbReference type="GO" id="GO:0042025">
    <property type="term" value="C:host cell nucleus"/>
    <property type="evidence" value="ECO:0007669"/>
    <property type="project" value="UniProtKB-SubCell"/>
</dbReference>
<dbReference type="GO" id="GO:0019028">
    <property type="term" value="C:viral capsid"/>
    <property type="evidence" value="ECO:0000314"/>
    <property type="project" value="CACAO"/>
</dbReference>
<dbReference type="GO" id="GO:0003677">
    <property type="term" value="F:DNA binding"/>
    <property type="evidence" value="ECO:0007669"/>
    <property type="project" value="InterPro"/>
</dbReference>
<dbReference type="GO" id="GO:0019069">
    <property type="term" value="P:viral capsid assembly"/>
    <property type="evidence" value="ECO:0007669"/>
    <property type="project" value="InterPro"/>
</dbReference>
<dbReference type="HAMAP" id="MF_04018">
    <property type="entry name" value="HSV_TRX1"/>
    <property type="match status" value="1"/>
</dbReference>
<dbReference type="InterPro" id="IPR004999">
    <property type="entry name" value="Herpes_1"/>
</dbReference>
<dbReference type="Pfam" id="PF03327">
    <property type="entry name" value="Herpes_VP19C"/>
    <property type="match status" value="1"/>
</dbReference>
<keyword id="KW-0167">Capsid protein</keyword>
<keyword id="KW-0903">Direct protein sequencing</keyword>
<keyword id="KW-1048">Host nucleus</keyword>
<keyword id="KW-1185">Reference proteome</keyword>
<keyword id="KW-0946">Virion</keyword>
<evidence type="ECO:0000255" key="1">
    <source>
        <dbReference type="HAMAP-Rule" id="MF_04018"/>
    </source>
</evidence>
<evidence type="ECO:0000256" key="2">
    <source>
        <dbReference type="SAM" id="MobiDB-lite"/>
    </source>
</evidence>
<evidence type="ECO:0000269" key="3">
    <source>
    </source>
</evidence>
<evidence type="ECO:0000269" key="4">
    <source>
    </source>
</evidence>
<evidence type="ECO:0000269" key="5">
    <source>
    </source>
</evidence>
<evidence type="ECO:0000269" key="6">
    <source>
    </source>
</evidence>
<evidence type="ECO:0000269" key="7">
    <source>
    </source>
</evidence>
<evidence type="ECO:0000269" key="8">
    <source>
    </source>
</evidence>